<gene>
    <name evidence="1" type="primary">atpB</name>
    <name type="ordered locus">SAK_0981</name>
</gene>
<keyword id="KW-0066">ATP synthesis</keyword>
<keyword id="KW-1003">Cell membrane</keyword>
<keyword id="KW-0138">CF(0)</keyword>
<keyword id="KW-0375">Hydrogen ion transport</keyword>
<keyword id="KW-0406">Ion transport</keyword>
<keyword id="KW-0472">Membrane</keyword>
<keyword id="KW-0812">Transmembrane</keyword>
<keyword id="KW-1133">Transmembrane helix</keyword>
<keyword id="KW-0813">Transport</keyword>
<proteinExistence type="inferred from homology"/>
<name>ATP6_STRA1</name>
<reference key="1">
    <citation type="journal article" date="2005" name="Proc. Natl. Acad. Sci. U.S.A.">
        <title>Genome analysis of multiple pathogenic isolates of Streptococcus agalactiae: implications for the microbial 'pan-genome'.</title>
        <authorList>
            <person name="Tettelin H."/>
            <person name="Masignani V."/>
            <person name="Cieslewicz M.J."/>
            <person name="Donati C."/>
            <person name="Medini D."/>
            <person name="Ward N.L."/>
            <person name="Angiuoli S.V."/>
            <person name="Crabtree J."/>
            <person name="Jones A.L."/>
            <person name="Durkin A.S."/>
            <person name="DeBoy R.T."/>
            <person name="Davidsen T.M."/>
            <person name="Mora M."/>
            <person name="Scarselli M."/>
            <person name="Margarit y Ros I."/>
            <person name="Peterson J.D."/>
            <person name="Hauser C.R."/>
            <person name="Sundaram J.P."/>
            <person name="Nelson W.C."/>
            <person name="Madupu R."/>
            <person name="Brinkac L.M."/>
            <person name="Dodson R.J."/>
            <person name="Rosovitz M.J."/>
            <person name="Sullivan S.A."/>
            <person name="Daugherty S.C."/>
            <person name="Haft D.H."/>
            <person name="Selengut J."/>
            <person name="Gwinn M.L."/>
            <person name="Zhou L."/>
            <person name="Zafar N."/>
            <person name="Khouri H."/>
            <person name="Radune D."/>
            <person name="Dimitrov G."/>
            <person name="Watkins K."/>
            <person name="O'Connor K.J."/>
            <person name="Smith S."/>
            <person name="Utterback T.R."/>
            <person name="White O."/>
            <person name="Rubens C.E."/>
            <person name="Grandi G."/>
            <person name="Madoff L.C."/>
            <person name="Kasper D.L."/>
            <person name="Telford J.L."/>
            <person name="Wessels M.R."/>
            <person name="Rappuoli R."/>
            <person name="Fraser C.M."/>
        </authorList>
    </citation>
    <scope>NUCLEOTIDE SEQUENCE [LARGE SCALE GENOMIC DNA]</scope>
    <source>
        <strain>ATCC 27591 / A909 / CDC SS700</strain>
    </source>
</reference>
<evidence type="ECO:0000255" key="1">
    <source>
        <dbReference type="HAMAP-Rule" id="MF_01393"/>
    </source>
</evidence>
<sequence>MESTSNPTVSFLGIDFDLTILAMSLLTITIIFILVFWASRKMTIKPKGKQNVLEYVYELVNNTISQNLGHYTKNYSLLMFILFSFVFIANNLGLMTSLKTHEHNFWTSPTANFGVDITLSLLVAFICHIEGIRKKGIGGYLKGFLSPTPAMLPMNLLEEVTNVASLALRLFGNIFSGEVVTGLLLQLAVLSPFTGPLAFALNIVWTAFSMFIGFIQAYVFIILSSSYIGHKVHGDEEE</sequence>
<protein>
    <recommendedName>
        <fullName evidence="1">ATP synthase subunit a</fullName>
    </recommendedName>
    <alternativeName>
        <fullName evidence="1">ATP synthase F0 sector subunit a</fullName>
    </alternativeName>
    <alternativeName>
        <fullName evidence="1">F-ATPase subunit 6</fullName>
    </alternativeName>
</protein>
<dbReference type="EMBL" id="CP000114">
    <property type="protein sequence ID" value="ABA46322.1"/>
    <property type="molecule type" value="Genomic_DNA"/>
</dbReference>
<dbReference type="RefSeq" id="WP_000446421.1">
    <property type="nucleotide sequence ID" value="NC_007432.1"/>
</dbReference>
<dbReference type="SMR" id="Q3K1K0"/>
<dbReference type="GeneID" id="66885808"/>
<dbReference type="KEGG" id="sak:SAK_0981"/>
<dbReference type="HOGENOM" id="CLU_041018_2_3_9"/>
<dbReference type="GO" id="GO:0005886">
    <property type="term" value="C:plasma membrane"/>
    <property type="evidence" value="ECO:0007669"/>
    <property type="project" value="UniProtKB-SubCell"/>
</dbReference>
<dbReference type="GO" id="GO:0045259">
    <property type="term" value="C:proton-transporting ATP synthase complex"/>
    <property type="evidence" value="ECO:0007669"/>
    <property type="project" value="UniProtKB-KW"/>
</dbReference>
<dbReference type="GO" id="GO:0046933">
    <property type="term" value="F:proton-transporting ATP synthase activity, rotational mechanism"/>
    <property type="evidence" value="ECO:0007669"/>
    <property type="project" value="UniProtKB-UniRule"/>
</dbReference>
<dbReference type="GO" id="GO:0042777">
    <property type="term" value="P:proton motive force-driven plasma membrane ATP synthesis"/>
    <property type="evidence" value="ECO:0007669"/>
    <property type="project" value="TreeGrafter"/>
</dbReference>
<dbReference type="CDD" id="cd00310">
    <property type="entry name" value="ATP-synt_Fo_a_6"/>
    <property type="match status" value="1"/>
</dbReference>
<dbReference type="Gene3D" id="1.20.120.220">
    <property type="entry name" value="ATP synthase, F0 complex, subunit A"/>
    <property type="match status" value="1"/>
</dbReference>
<dbReference type="HAMAP" id="MF_01393">
    <property type="entry name" value="ATP_synth_a_bact"/>
    <property type="match status" value="1"/>
</dbReference>
<dbReference type="InterPro" id="IPR045082">
    <property type="entry name" value="ATP_syn_F0_a_bact/chloroplast"/>
</dbReference>
<dbReference type="InterPro" id="IPR000568">
    <property type="entry name" value="ATP_synth_F0_asu"/>
</dbReference>
<dbReference type="InterPro" id="IPR023011">
    <property type="entry name" value="ATP_synth_F0_asu_AS"/>
</dbReference>
<dbReference type="InterPro" id="IPR035908">
    <property type="entry name" value="F0_ATP_A_sf"/>
</dbReference>
<dbReference type="NCBIfam" id="TIGR01131">
    <property type="entry name" value="ATP_synt_6_or_A"/>
    <property type="match status" value="1"/>
</dbReference>
<dbReference type="NCBIfam" id="NF004479">
    <property type="entry name" value="PRK05815.1-4"/>
    <property type="match status" value="1"/>
</dbReference>
<dbReference type="PANTHER" id="PTHR42823">
    <property type="entry name" value="ATP SYNTHASE SUBUNIT A, CHLOROPLASTIC"/>
    <property type="match status" value="1"/>
</dbReference>
<dbReference type="PANTHER" id="PTHR42823:SF3">
    <property type="entry name" value="ATP SYNTHASE SUBUNIT A, CHLOROPLASTIC"/>
    <property type="match status" value="1"/>
</dbReference>
<dbReference type="Pfam" id="PF00119">
    <property type="entry name" value="ATP-synt_A"/>
    <property type="match status" value="1"/>
</dbReference>
<dbReference type="PRINTS" id="PR00123">
    <property type="entry name" value="ATPASEA"/>
</dbReference>
<dbReference type="SUPFAM" id="SSF81336">
    <property type="entry name" value="F1F0 ATP synthase subunit A"/>
    <property type="match status" value="1"/>
</dbReference>
<dbReference type="PROSITE" id="PS00449">
    <property type="entry name" value="ATPASE_A"/>
    <property type="match status" value="1"/>
</dbReference>
<comment type="function">
    <text evidence="1">Key component of the proton channel; it plays a direct role in the translocation of protons across the membrane.</text>
</comment>
<comment type="subunit">
    <text evidence="1">F-type ATPases have 2 components, CF(1) - the catalytic core - and CF(0) - the membrane proton channel. CF(1) has five subunits: alpha(3), beta(3), gamma(1), delta(1), epsilon(1). CF(0) has three main subunits: a(1), b(2) and c(9-12). The alpha and beta chains form an alternating ring which encloses part of the gamma chain. CF(1) is attached to CF(0) by a central stalk formed by the gamma and epsilon chains, while a peripheral stalk is formed by the delta and b chains.</text>
</comment>
<comment type="subcellular location">
    <subcellularLocation>
        <location evidence="1">Cell membrane</location>
        <topology evidence="1">Multi-pass membrane protein</topology>
    </subcellularLocation>
</comment>
<comment type="similarity">
    <text evidence="1">Belongs to the ATPase A chain family.</text>
</comment>
<feature type="chain" id="PRO_0000362475" description="ATP synthase subunit a">
    <location>
        <begin position="1"/>
        <end position="238"/>
    </location>
</feature>
<feature type="transmembrane region" description="Helical" evidence="1">
    <location>
        <begin position="18"/>
        <end position="38"/>
    </location>
</feature>
<feature type="transmembrane region" description="Helical" evidence="1">
    <location>
        <begin position="75"/>
        <end position="95"/>
    </location>
</feature>
<feature type="transmembrane region" description="Helical" evidence="1">
    <location>
        <begin position="112"/>
        <end position="132"/>
    </location>
</feature>
<feature type="transmembrane region" description="Helical" evidence="1">
    <location>
        <begin position="179"/>
        <end position="199"/>
    </location>
</feature>
<feature type="transmembrane region" description="Helical" evidence="1">
    <location>
        <begin position="203"/>
        <end position="223"/>
    </location>
</feature>
<accession>Q3K1K0</accession>
<organism>
    <name type="scientific">Streptococcus agalactiae serotype Ia (strain ATCC 27591 / A909 / CDC SS700)</name>
    <dbReference type="NCBI Taxonomy" id="205921"/>
    <lineage>
        <taxon>Bacteria</taxon>
        <taxon>Bacillati</taxon>
        <taxon>Bacillota</taxon>
        <taxon>Bacilli</taxon>
        <taxon>Lactobacillales</taxon>
        <taxon>Streptococcaceae</taxon>
        <taxon>Streptococcus</taxon>
    </lineage>
</organism>